<sequence length="317" mass="34281">MRFSTQMMYQQNMRGITNSQAEWMKYGEQMSTGKRVVNPSDDPIAASQAVVLSQAQAQNSQYTLARTFATQKVSLEESVLSQVTTAIQNAQEKIVYASNGTLSDDDRASLATDIQGLRDQLLNLANTTDGNGRYIFAGYKTETAPFSEEKGKYVGGAESIKQQVDASRSMVIGHTGDKIFDSITSNAVAEPDGSASETNLFAMLDSAIAALKTPVADSEADKETAAAALDKTNRGLKNSLNNVLTVRAELGTQLNELESLDSLGSDRALGQTQQMSDLVDVDWNATISSYIMQQTALQASYKAFTDMQGLSLFQLSK</sequence>
<dbReference type="EMBL" id="U02514">
    <property type="protein sequence ID" value="AAA18322.1"/>
    <property type="molecule type" value="Unassigned_DNA"/>
</dbReference>
<dbReference type="EMBL" id="U00096">
    <property type="protein sequence ID" value="AAC74167.1"/>
    <property type="molecule type" value="Genomic_DNA"/>
</dbReference>
<dbReference type="EMBL" id="AP009048">
    <property type="protein sequence ID" value="BAA35892.1"/>
    <property type="molecule type" value="Genomic_DNA"/>
</dbReference>
<dbReference type="EMBL" id="X67470">
    <property type="status" value="NOT_ANNOTATED_CDS"/>
    <property type="molecule type" value="Genomic_DNA"/>
</dbReference>
<dbReference type="PIR" id="S44022">
    <property type="entry name" value="S44022"/>
</dbReference>
<dbReference type="RefSeq" id="NP_415601.1">
    <property type="nucleotide sequence ID" value="NC_000913.3"/>
</dbReference>
<dbReference type="RefSeq" id="WP_001212782.1">
    <property type="nucleotide sequence ID" value="NZ_SSZK01000053.1"/>
</dbReference>
<dbReference type="SMR" id="P29744"/>
<dbReference type="BioGRID" id="4261022">
    <property type="interactions" value="9"/>
</dbReference>
<dbReference type="FunCoup" id="P29744">
    <property type="interactions" value="83"/>
</dbReference>
<dbReference type="IntAct" id="P29744">
    <property type="interactions" value="7"/>
</dbReference>
<dbReference type="STRING" id="511145.b1083"/>
<dbReference type="PaxDb" id="511145-b1083"/>
<dbReference type="EnsemblBacteria" id="AAC74167">
    <property type="protein sequence ID" value="AAC74167"/>
    <property type="gene ID" value="b1083"/>
</dbReference>
<dbReference type="GeneID" id="75203670"/>
<dbReference type="GeneID" id="945646"/>
<dbReference type="KEGG" id="ecj:JW1070"/>
<dbReference type="KEGG" id="eco:b1083"/>
<dbReference type="KEGG" id="ecoc:C3026_06560"/>
<dbReference type="PATRIC" id="fig|1411691.4.peg.1185"/>
<dbReference type="EchoBASE" id="EB1507"/>
<dbReference type="eggNOG" id="COG1344">
    <property type="taxonomic scope" value="Bacteria"/>
</dbReference>
<dbReference type="HOGENOM" id="CLU_024437_5_0_6"/>
<dbReference type="InParanoid" id="P29744"/>
<dbReference type="OMA" id="MRVTQGM"/>
<dbReference type="OrthoDB" id="9768249at2"/>
<dbReference type="PhylomeDB" id="P29744"/>
<dbReference type="BioCyc" id="EcoCyc:EG11545-MONOMER"/>
<dbReference type="PRO" id="PR:P29744"/>
<dbReference type="Proteomes" id="UP000000625">
    <property type="component" value="Chromosome"/>
</dbReference>
<dbReference type="GO" id="GO:0009424">
    <property type="term" value="C:bacterial-type flagellum hook"/>
    <property type="evidence" value="ECO:0007669"/>
    <property type="project" value="InterPro"/>
</dbReference>
<dbReference type="GO" id="GO:0005576">
    <property type="term" value="C:extracellular region"/>
    <property type="evidence" value="ECO:0007669"/>
    <property type="project" value="UniProtKB-SubCell"/>
</dbReference>
<dbReference type="GO" id="GO:0005198">
    <property type="term" value="F:structural molecule activity"/>
    <property type="evidence" value="ECO:0007669"/>
    <property type="project" value="InterPro"/>
</dbReference>
<dbReference type="GO" id="GO:0071973">
    <property type="term" value="P:bacterial-type flagellum-dependent cell motility"/>
    <property type="evidence" value="ECO:0007669"/>
    <property type="project" value="InterPro"/>
</dbReference>
<dbReference type="Gene3D" id="1.20.1330.10">
    <property type="entry name" value="f41 fragment of flagellin, N-terminal domain"/>
    <property type="match status" value="1"/>
</dbReference>
<dbReference type="InterPro" id="IPR013384">
    <property type="entry name" value="Flagell_FlgL"/>
</dbReference>
<dbReference type="InterPro" id="IPR001492">
    <property type="entry name" value="Flagellin"/>
</dbReference>
<dbReference type="InterPro" id="IPR001029">
    <property type="entry name" value="Flagellin_N"/>
</dbReference>
<dbReference type="NCBIfam" id="TIGR02550">
    <property type="entry name" value="flagell_flgL"/>
    <property type="match status" value="1"/>
</dbReference>
<dbReference type="PANTHER" id="PTHR42792:SF1">
    <property type="entry name" value="FLAGELLAR HOOK-ASSOCIATED PROTEIN 3"/>
    <property type="match status" value="1"/>
</dbReference>
<dbReference type="PANTHER" id="PTHR42792">
    <property type="entry name" value="FLAGELLIN"/>
    <property type="match status" value="1"/>
</dbReference>
<dbReference type="Pfam" id="PF00669">
    <property type="entry name" value="Flagellin_N"/>
    <property type="match status" value="1"/>
</dbReference>
<dbReference type="SUPFAM" id="SSF64518">
    <property type="entry name" value="Phase 1 flagellin"/>
    <property type="match status" value="1"/>
</dbReference>
<reference key="1">
    <citation type="journal article" date="1994" name="J. Mol. Biol.">
        <title>A mutant hook-associated protein (HAP3) facilitates torsionally induced transformations of the flagellar filament of Escherichia coli.</title>
        <authorList>
            <person name="Fahrner K.A."/>
            <person name="Block S.M."/>
            <person name="Krishnaswamy S."/>
            <person name="Parkinson J.S."/>
            <person name="Berg H.C."/>
        </authorList>
    </citation>
    <scope>NUCLEOTIDE SEQUENCE [GENOMIC DNA]</scope>
    <source>
        <strain>K12 / CS520</strain>
    </source>
</reference>
<reference key="2">
    <citation type="journal article" date="1996" name="DNA Res.">
        <title>A 718-kb DNA sequence of the Escherichia coli K-12 genome corresponding to the 12.7-28.0 min region on the linkage map.</title>
        <authorList>
            <person name="Oshima T."/>
            <person name="Aiba H."/>
            <person name="Baba T."/>
            <person name="Fujita K."/>
            <person name="Hayashi K."/>
            <person name="Honjo A."/>
            <person name="Ikemoto K."/>
            <person name="Inada T."/>
            <person name="Itoh T."/>
            <person name="Kajihara M."/>
            <person name="Kanai K."/>
            <person name="Kashimoto K."/>
            <person name="Kimura S."/>
            <person name="Kitagawa M."/>
            <person name="Makino K."/>
            <person name="Masuda S."/>
            <person name="Miki T."/>
            <person name="Mizobuchi K."/>
            <person name="Mori H."/>
            <person name="Motomura K."/>
            <person name="Nakamura Y."/>
            <person name="Nashimoto H."/>
            <person name="Nishio Y."/>
            <person name="Saito N."/>
            <person name="Sampei G."/>
            <person name="Seki Y."/>
            <person name="Tagami H."/>
            <person name="Takemoto K."/>
            <person name="Wada C."/>
            <person name="Yamamoto Y."/>
            <person name="Yano M."/>
            <person name="Horiuchi T."/>
        </authorList>
    </citation>
    <scope>NUCLEOTIDE SEQUENCE [LARGE SCALE GENOMIC DNA]</scope>
    <source>
        <strain>K12 / W3110 / ATCC 27325 / DSM 5911</strain>
    </source>
</reference>
<reference key="3">
    <citation type="journal article" date="1997" name="Science">
        <title>The complete genome sequence of Escherichia coli K-12.</title>
        <authorList>
            <person name="Blattner F.R."/>
            <person name="Plunkett G. III"/>
            <person name="Bloch C.A."/>
            <person name="Perna N.T."/>
            <person name="Burland V."/>
            <person name="Riley M."/>
            <person name="Collado-Vides J."/>
            <person name="Glasner J.D."/>
            <person name="Rode C.K."/>
            <person name="Mayhew G.F."/>
            <person name="Gregor J."/>
            <person name="Davis N.W."/>
            <person name="Kirkpatrick H.A."/>
            <person name="Goeden M.A."/>
            <person name="Rose D.J."/>
            <person name="Mau B."/>
            <person name="Shao Y."/>
        </authorList>
    </citation>
    <scope>NUCLEOTIDE SEQUENCE [LARGE SCALE GENOMIC DNA]</scope>
    <source>
        <strain>K12 / MG1655 / ATCC 47076</strain>
    </source>
</reference>
<reference key="4">
    <citation type="journal article" date="2006" name="Mol. Syst. Biol.">
        <title>Highly accurate genome sequences of Escherichia coli K-12 strains MG1655 and W3110.</title>
        <authorList>
            <person name="Hayashi K."/>
            <person name="Morooka N."/>
            <person name="Yamamoto Y."/>
            <person name="Fujita K."/>
            <person name="Isono K."/>
            <person name="Choi S."/>
            <person name="Ohtsubo E."/>
            <person name="Baba T."/>
            <person name="Wanner B.L."/>
            <person name="Mori H."/>
            <person name="Horiuchi T."/>
        </authorList>
    </citation>
    <scope>NUCLEOTIDE SEQUENCE [LARGE SCALE GENOMIC DNA]</scope>
    <source>
        <strain>K12 / W3110 / ATCC 27325 / DSM 5911</strain>
    </source>
</reference>
<reference key="5">
    <citation type="journal article" date="1992" name="J. Mol. Biol.">
        <title>Cloning and analysis of the entire Escherichia coli ams gene. ams is identical to hmp1 and encodes a 114 kDa protein that migrates as a 180 kDa protein.</title>
        <authorList>
            <person name="Casaregola S."/>
            <person name="Jacq A."/>
            <person name="Laoudj D."/>
            <person name="McGurk G."/>
            <person name="Margarson S."/>
            <person name="Tempete M."/>
            <person name="Norris V."/>
            <person name="Holland I.B."/>
        </authorList>
    </citation>
    <scope>NUCLEOTIDE SEQUENCE [GENOMIC DNA] OF 292-317</scope>
    <source>
        <strain>K12</strain>
    </source>
</reference>
<accession>P29744</accession>
<proteinExistence type="inferred from homology"/>
<feature type="chain" id="PRO_0000182661" description="Flagellar hook-associated protein 3">
    <location>
        <begin position="1"/>
        <end position="317"/>
    </location>
</feature>
<feature type="sequence variant" description="In HAP3; exhibits impaired swimming only when in contact with a solid surface or a semisolid matrix.">
    <original>R</original>
    <variation>C</variation>
    <location>
        <position position="168"/>
    </location>
</feature>
<keyword id="KW-0975">Bacterial flagellum</keyword>
<keyword id="KW-1185">Reference proteome</keyword>
<keyword id="KW-0964">Secreted</keyword>
<name>FLGL_ECOLI</name>
<evidence type="ECO:0000305" key="1"/>
<organism>
    <name type="scientific">Escherichia coli (strain K12)</name>
    <dbReference type="NCBI Taxonomy" id="83333"/>
    <lineage>
        <taxon>Bacteria</taxon>
        <taxon>Pseudomonadati</taxon>
        <taxon>Pseudomonadota</taxon>
        <taxon>Gammaproteobacteria</taxon>
        <taxon>Enterobacterales</taxon>
        <taxon>Enterobacteriaceae</taxon>
        <taxon>Escherichia</taxon>
    </lineage>
</organism>
<comment type="subcellular location">
    <subcellularLocation>
        <location>Secreted</location>
    </subcellularLocation>
    <subcellularLocation>
        <location>Bacterial flagellum</location>
    </subcellularLocation>
</comment>
<comment type="similarity">
    <text evidence="1">Belongs to the bacterial flagellin family.</text>
</comment>
<protein>
    <recommendedName>
        <fullName>Flagellar hook-associated protein 3</fullName>
        <shortName>HAP3</shortName>
    </recommendedName>
    <alternativeName>
        <fullName>Hook-filament junction protein</fullName>
    </alternativeName>
</protein>
<gene>
    <name type="primary">flgL</name>
    <name type="synonym">flaT</name>
    <name type="synonym">flaU</name>
    <name type="ordered locus">b1083</name>
    <name type="ordered locus">JW1070</name>
</gene>